<accession>Q96VB6</accession>
<accession>Q2UNW4</accession>
<name>XYNF3_ASPOR</name>
<comment type="function">
    <text evidence="4">Endo-1,4-beta-xylanase involved in the hydrolysis of xylan, a major structural heterogeneous polysaccharide found in plant biomass representing the second most abundant polysaccharide in the biosphere, after cellulose.</text>
</comment>
<comment type="catalytic activity">
    <reaction>
        <text>Endohydrolysis of (1-&gt;4)-beta-D-xylosidic linkages in xylans.</text>
        <dbReference type="EC" id="3.2.1.8"/>
    </reaction>
</comment>
<comment type="biophysicochemical properties">
    <kinetics>
        <KM evidence="4">200 uM for birch wood xylan</KM>
        <Vmax evidence="4">435.0 umol/min/mg enzyme</Vmax>
    </kinetics>
    <phDependence>
        <text evidence="4">Optimum pH is 5.5. Retain 85 percent of its activity in the pH range from 6.0 to 7.0 after a 12 h incubation at 25 degrees Celsius.</text>
    </phDependence>
    <temperatureDependence>
        <text evidence="4">Optimum temperature is 58 degrees Celsius. The purified enzyme showed complete stability under 60 degrees Celsius.</text>
    </temperatureDependence>
</comment>
<comment type="pathway">
    <text>Glycan degradation; xylan degradation.</text>
</comment>
<comment type="subcellular location">
    <subcellularLocation>
        <location evidence="4 5">Secreted</location>
    </subcellularLocation>
</comment>
<comment type="miscellaneous">
    <text>The promoter does not contain any 5'-GGCTAAA-3' sequence identified as binding sites for the xylanolytic transcriptional activator xlnR.</text>
</comment>
<comment type="similarity">
    <text evidence="6">Belongs to the glycosyl hydrolase 10 (cellulase F) family.</text>
</comment>
<comment type="sequence caution" evidence="6">
    <conflict type="erroneous gene model prediction">
        <sequence resource="EMBL-CDS" id="BAE56751"/>
    </conflict>
</comment>
<dbReference type="EC" id="3.2.1.8"/>
<dbReference type="EMBL" id="EU848306">
    <property type="protein sequence ID" value="ACJ26383.1"/>
    <property type="molecule type" value="mRNA"/>
</dbReference>
<dbReference type="EMBL" id="AB066176">
    <property type="protein sequence ID" value="BAB69073.1"/>
    <property type="molecule type" value="Genomic_DNA"/>
</dbReference>
<dbReference type="EMBL" id="BA000050">
    <property type="protein sequence ID" value="BAE56751.1"/>
    <property type="status" value="ALT_SEQ"/>
    <property type="molecule type" value="Genomic_DNA"/>
</dbReference>
<dbReference type="PIR" id="JC7813">
    <property type="entry name" value="JC7813"/>
</dbReference>
<dbReference type="SMR" id="Q96VB6"/>
<dbReference type="STRING" id="510516.Q96VB6"/>
<dbReference type="CAZy" id="GH10">
    <property type="family name" value="Glycoside Hydrolase Family 10"/>
</dbReference>
<dbReference type="UniPathway" id="UPA00114"/>
<dbReference type="Proteomes" id="UP000006564">
    <property type="component" value="Chromosome 2"/>
</dbReference>
<dbReference type="GO" id="GO:0005576">
    <property type="term" value="C:extracellular region"/>
    <property type="evidence" value="ECO:0000314"/>
    <property type="project" value="UniProtKB"/>
</dbReference>
<dbReference type="GO" id="GO:0031176">
    <property type="term" value="F:endo-1,4-beta-xylanase activity"/>
    <property type="evidence" value="ECO:0000314"/>
    <property type="project" value="UniProtKB"/>
</dbReference>
<dbReference type="GO" id="GO:0045493">
    <property type="term" value="P:xylan catabolic process"/>
    <property type="evidence" value="ECO:0000314"/>
    <property type="project" value="UniProtKB"/>
</dbReference>
<dbReference type="FunFam" id="3.20.20.80:FF:000094">
    <property type="entry name" value="Endo-1,4-beta-xylanase"/>
    <property type="match status" value="1"/>
</dbReference>
<dbReference type="Gene3D" id="3.20.20.80">
    <property type="entry name" value="Glycosidases"/>
    <property type="match status" value="1"/>
</dbReference>
<dbReference type="InterPro" id="IPR044846">
    <property type="entry name" value="GH10"/>
</dbReference>
<dbReference type="InterPro" id="IPR001000">
    <property type="entry name" value="GH10_dom"/>
</dbReference>
<dbReference type="InterPro" id="IPR017853">
    <property type="entry name" value="Glycoside_hydrolase_SF"/>
</dbReference>
<dbReference type="PANTHER" id="PTHR31490:SF76">
    <property type="entry name" value="ENDO-1,4-BETA-XYLANASE C"/>
    <property type="match status" value="1"/>
</dbReference>
<dbReference type="PANTHER" id="PTHR31490">
    <property type="entry name" value="GLYCOSYL HYDROLASE"/>
    <property type="match status" value="1"/>
</dbReference>
<dbReference type="Pfam" id="PF00331">
    <property type="entry name" value="Glyco_hydro_10"/>
    <property type="match status" value="1"/>
</dbReference>
<dbReference type="PRINTS" id="PR00134">
    <property type="entry name" value="GLHYDRLASE10"/>
</dbReference>
<dbReference type="SMART" id="SM00633">
    <property type="entry name" value="Glyco_10"/>
    <property type="match status" value="1"/>
</dbReference>
<dbReference type="SUPFAM" id="SSF51445">
    <property type="entry name" value="(Trans)glycosidases"/>
    <property type="match status" value="1"/>
</dbReference>
<dbReference type="PROSITE" id="PS51760">
    <property type="entry name" value="GH10_2"/>
    <property type="match status" value="1"/>
</dbReference>
<reference key="1">
    <citation type="journal article" date="2002" name="Biosci. Biotechnol. Biochem.">
        <title>Molecular cloning, characterization, and expression analysis of the xynF3 gene from Aspergillus oryzae.</title>
        <authorList>
            <person name="Kimura T."/>
            <person name="Suzuki H."/>
            <person name="Furuhashi H."/>
            <person name="Aburatani T."/>
            <person name="Morimoto K."/>
            <person name="Sakka K."/>
            <person name="Ohmiya K."/>
        </authorList>
    </citation>
    <scope>NUCLEOTIDE SEQUENCE [MRNA]</scope>
    <scope>FUNCTION</scope>
    <scope>SUBCELLULAR LOCATION</scope>
    <scope>BIOPHYSICOCHEMICAL PROPERTIES</scope>
</reference>
<reference key="2">
    <citation type="submission" date="2008-06" db="EMBL/GenBank/DDBJ databases">
        <title>Gene cloning, sequencing, expression and characterization of a xylanase gene from Aspergillus niger DMS1957.</title>
        <authorList>
            <person name="Quyen D.T."/>
            <person name="Nguyen S.L.T."/>
        </authorList>
    </citation>
    <scope>NUCLEOTIDE SEQUENCE [GENOMIC DNA]</scope>
    <source>
        <strain>VTCC-F-187</strain>
    </source>
</reference>
<reference key="3">
    <citation type="journal article" date="2005" name="Nature">
        <title>Genome sequencing and analysis of Aspergillus oryzae.</title>
        <authorList>
            <person name="Machida M."/>
            <person name="Asai K."/>
            <person name="Sano M."/>
            <person name="Tanaka T."/>
            <person name="Kumagai T."/>
            <person name="Terai G."/>
            <person name="Kusumoto K."/>
            <person name="Arima T."/>
            <person name="Akita O."/>
            <person name="Kashiwagi Y."/>
            <person name="Abe K."/>
            <person name="Gomi K."/>
            <person name="Horiuchi H."/>
            <person name="Kitamoto K."/>
            <person name="Kobayashi T."/>
            <person name="Takeuchi M."/>
            <person name="Denning D.W."/>
            <person name="Galagan J.E."/>
            <person name="Nierman W.C."/>
            <person name="Yu J."/>
            <person name="Archer D.B."/>
            <person name="Bennett J.W."/>
            <person name="Bhatnagar D."/>
            <person name="Cleveland T.E."/>
            <person name="Fedorova N.D."/>
            <person name="Gotoh O."/>
            <person name="Horikawa H."/>
            <person name="Hosoyama A."/>
            <person name="Ichinomiya M."/>
            <person name="Igarashi R."/>
            <person name="Iwashita K."/>
            <person name="Juvvadi P.R."/>
            <person name="Kato M."/>
            <person name="Kato Y."/>
            <person name="Kin T."/>
            <person name="Kokubun A."/>
            <person name="Maeda H."/>
            <person name="Maeyama N."/>
            <person name="Maruyama J."/>
            <person name="Nagasaki H."/>
            <person name="Nakajima T."/>
            <person name="Oda K."/>
            <person name="Okada K."/>
            <person name="Paulsen I."/>
            <person name="Sakamoto K."/>
            <person name="Sawano T."/>
            <person name="Takahashi M."/>
            <person name="Takase K."/>
            <person name="Terabayashi Y."/>
            <person name="Wortman J.R."/>
            <person name="Yamada O."/>
            <person name="Yamagata Y."/>
            <person name="Anazawa H."/>
            <person name="Hata Y."/>
            <person name="Koide Y."/>
            <person name="Komori T."/>
            <person name="Koyama Y."/>
            <person name="Minetoki T."/>
            <person name="Suharnan S."/>
            <person name="Tanaka A."/>
            <person name="Isono K."/>
            <person name="Kuhara S."/>
            <person name="Ogasawara N."/>
            <person name="Kikuchi H."/>
        </authorList>
    </citation>
    <scope>NUCLEOTIDE SEQUENCE [LARGE SCALE GENOMIC DNA]</scope>
    <source>
        <strain>ATCC 42149 / RIB 40</strain>
    </source>
</reference>
<reference key="4">
    <citation type="journal article" date="2006" name="Appl. Environ. Microbiol.">
        <title>Proteomic analysis of extracellular proteins from Aspergillus oryzae grown under submerged and solid-state culture conditions.</title>
        <authorList>
            <person name="Oda K."/>
            <person name="Kakizono D."/>
            <person name="Yamada O."/>
            <person name="Iefuji H."/>
            <person name="Akita O."/>
            <person name="Iwashita K."/>
        </authorList>
    </citation>
    <scope>IDENTIFICATION BY MASS SPECTROMETRY</scope>
    <scope>SUBCELLULAR LOCATION</scope>
</reference>
<gene>
    <name type="primary">xynF3</name>
    <name type="synonym">xlnF3</name>
    <name type="ORF">AO090001000208</name>
</gene>
<evidence type="ECO:0000250" key="1"/>
<evidence type="ECO:0000255" key="2"/>
<evidence type="ECO:0000255" key="3">
    <source>
        <dbReference type="PROSITE-ProRule" id="PRU01096"/>
    </source>
</evidence>
<evidence type="ECO:0000269" key="4">
    <source>
    </source>
</evidence>
<evidence type="ECO:0000269" key="5">
    <source>
    </source>
</evidence>
<evidence type="ECO:0000305" key="6"/>
<feature type="signal peptide" evidence="2">
    <location>
        <begin position="1"/>
        <end position="23"/>
    </location>
</feature>
<feature type="chain" id="PRO_0000393192" description="Endo-1,4-beta-xylanase F3">
    <location>
        <begin position="24"/>
        <end position="323"/>
    </location>
</feature>
<feature type="domain" description="GH10" evidence="3">
    <location>
        <begin position="43"/>
        <end position="322"/>
    </location>
</feature>
<feature type="active site" description="Proton donor" evidence="1">
    <location>
        <position position="153"/>
    </location>
</feature>
<feature type="active site" description="Nucleophile" evidence="1">
    <location>
        <position position="259"/>
    </location>
</feature>
<feature type="disulfide bond" evidence="1">
    <location>
        <begin position="277"/>
        <end position="283"/>
    </location>
</feature>
<protein>
    <recommendedName>
        <fullName>Endo-1,4-beta-xylanase F3</fullName>
        <shortName>Xylanase F3</shortName>
        <ecNumber>3.2.1.8</ecNumber>
    </recommendedName>
    <alternativeName>
        <fullName>1,4-beta-D-xylan xylanohydrolase F3</fullName>
    </alternativeName>
</protein>
<keyword id="KW-0119">Carbohydrate metabolism</keyword>
<keyword id="KW-1015">Disulfide bond</keyword>
<keyword id="KW-0326">Glycosidase</keyword>
<keyword id="KW-0378">Hydrolase</keyword>
<keyword id="KW-0624">Polysaccharide degradation</keyword>
<keyword id="KW-1185">Reference proteome</keyword>
<keyword id="KW-0964">Secreted</keyword>
<keyword id="KW-0732">Signal</keyword>
<keyword id="KW-0858">Xylan degradation</keyword>
<sequence length="323" mass="34696">MVHLKSLAGILLYTSLCIASSQQAPASINNAFVAKGKKYFGTCADQGTLSDGTNSGIIKADFGQLTPENSMKWDATEPSQGKFSFSGADYLVNYAATNNKLIRGHTLVWHSQLPSWVQGITDKNTLTSVLKNHITTVMNRYKGKVYAWDVVNEIFNEDGTLRSSVFYNVLGEDFVRIAFETARAADPQAKLYINDYNLDSANYGKTTGLANHVKKWIAQGIPIDGIGSQTHLSAGGSSGVKGALNTLAASGVSEVAITELDIAGASSNDYVNVVEACLEVSKCVGITVWGVSDKNSWRSAESPLLFDGNYQPKSAYNAILNAL</sequence>
<proteinExistence type="evidence at protein level"/>
<organism>
    <name type="scientific">Aspergillus oryzae (strain ATCC 42149 / RIB 40)</name>
    <name type="common">Yellow koji mold</name>
    <dbReference type="NCBI Taxonomy" id="510516"/>
    <lineage>
        <taxon>Eukaryota</taxon>
        <taxon>Fungi</taxon>
        <taxon>Dikarya</taxon>
        <taxon>Ascomycota</taxon>
        <taxon>Pezizomycotina</taxon>
        <taxon>Eurotiomycetes</taxon>
        <taxon>Eurotiomycetidae</taxon>
        <taxon>Eurotiales</taxon>
        <taxon>Aspergillaceae</taxon>
        <taxon>Aspergillus</taxon>
        <taxon>Aspergillus subgen. Circumdati</taxon>
    </lineage>
</organism>